<name>RL32_BRUA1</name>
<comment type="similarity">
    <text evidence="1">Belongs to the bacterial ribosomal protein bL32 family.</text>
</comment>
<dbReference type="EMBL" id="CP000887">
    <property type="protein sequence ID" value="ACD73150.1"/>
    <property type="molecule type" value="Genomic_DNA"/>
</dbReference>
<dbReference type="RefSeq" id="WP_002964856.1">
    <property type="nucleotide sequence ID" value="NC_010742.1"/>
</dbReference>
<dbReference type="SMR" id="B2S7K3"/>
<dbReference type="GeneID" id="97533091"/>
<dbReference type="KEGG" id="bmc:BAbS19_I16680"/>
<dbReference type="HOGENOM" id="CLU_129084_2_2_5"/>
<dbReference type="Proteomes" id="UP000002565">
    <property type="component" value="Chromosome 1"/>
</dbReference>
<dbReference type="GO" id="GO:0015934">
    <property type="term" value="C:large ribosomal subunit"/>
    <property type="evidence" value="ECO:0007669"/>
    <property type="project" value="InterPro"/>
</dbReference>
<dbReference type="GO" id="GO:0003735">
    <property type="term" value="F:structural constituent of ribosome"/>
    <property type="evidence" value="ECO:0007669"/>
    <property type="project" value="InterPro"/>
</dbReference>
<dbReference type="GO" id="GO:0006412">
    <property type="term" value="P:translation"/>
    <property type="evidence" value="ECO:0007669"/>
    <property type="project" value="UniProtKB-UniRule"/>
</dbReference>
<dbReference type="Gene3D" id="1.20.5.640">
    <property type="entry name" value="Single helix bin"/>
    <property type="match status" value="1"/>
</dbReference>
<dbReference type="HAMAP" id="MF_00340">
    <property type="entry name" value="Ribosomal_bL32"/>
    <property type="match status" value="1"/>
</dbReference>
<dbReference type="InterPro" id="IPR002677">
    <property type="entry name" value="Ribosomal_bL32"/>
</dbReference>
<dbReference type="InterPro" id="IPR044957">
    <property type="entry name" value="Ribosomal_bL32_bact"/>
</dbReference>
<dbReference type="InterPro" id="IPR011332">
    <property type="entry name" value="Ribosomal_zn-bd"/>
</dbReference>
<dbReference type="NCBIfam" id="TIGR01031">
    <property type="entry name" value="rpmF_bact"/>
    <property type="match status" value="1"/>
</dbReference>
<dbReference type="PANTHER" id="PTHR35534">
    <property type="entry name" value="50S RIBOSOMAL PROTEIN L32"/>
    <property type="match status" value="1"/>
</dbReference>
<dbReference type="PANTHER" id="PTHR35534:SF1">
    <property type="entry name" value="LARGE RIBOSOMAL SUBUNIT PROTEIN BL32"/>
    <property type="match status" value="1"/>
</dbReference>
<dbReference type="Pfam" id="PF01783">
    <property type="entry name" value="Ribosomal_L32p"/>
    <property type="match status" value="1"/>
</dbReference>
<dbReference type="SUPFAM" id="SSF57829">
    <property type="entry name" value="Zn-binding ribosomal proteins"/>
    <property type="match status" value="1"/>
</dbReference>
<reference key="1">
    <citation type="journal article" date="2008" name="PLoS ONE">
        <title>Genome sequence of Brucella abortus vaccine strain S19 compared to virulent strains yields candidate virulence genes.</title>
        <authorList>
            <person name="Crasta O.R."/>
            <person name="Folkerts O."/>
            <person name="Fei Z."/>
            <person name="Mane S.P."/>
            <person name="Evans C."/>
            <person name="Martino-Catt S."/>
            <person name="Bricker B."/>
            <person name="Yu G."/>
            <person name="Du L."/>
            <person name="Sobral B.W."/>
        </authorList>
    </citation>
    <scope>NUCLEOTIDE SEQUENCE [LARGE SCALE GENOMIC DNA]</scope>
    <source>
        <strain>S19</strain>
    </source>
</reference>
<feature type="chain" id="PRO_1000120096" description="Large ribosomal subunit protein bL32">
    <location>
        <begin position="1"/>
        <end position="59"/>
    </location>
</feature>
<feature type="region of interest" description="Disordered" evidence="2">
    <location>
        <begin position="1"/>
        <end position="59"/>
    </location>
</feature>
<feature type="compositionally biased region" description="Basic residues" evidence="2">
    <location>
        <begin position="1"/>
        <end position="16"/>
    </location>
</feature>
<feature type="compositionally biased region" description="Basic and acidic residues" evidence="2">
    <location>
        <begin position="28"/>
        <end position="44"/>
    </location>
</feature>
<gene>
    <name evidence="1" type="primary">rpmF</name>
    <name type="ordered locus">BAbS19_I16680</name>
</gene>
<keyword id="KW-0687">Ribonucleoprotein</keyword>
<keyword id="KW-0689">Ribosomal protein</keyword>
<protein>
    <recommendedName>
        <fullName evidence="1">Large ribosomal subunit protein bL32</fullName>
    </recommendedName>
    <alternativeName>
        <fullName evidence="3">50S ribosomal protein L32</fullName>
    </alternativeName>
</protein>
<evidence type="ECO:0000255" key="1">
    <source>
        <dbReference type="HAMAP-Rule" id="MF_00340"/>
    </source>
</evidence>
<evidence type="ECO:0000256" key="2">
    <source>
        <dbReference type="SAM" id="MobiDB-lite"/>
    </source>
</evidence>
<evidence type="ECO:0000305" key="3"/>
<organism>
    <name type="scientific">Brucella abortus (strain S19)</name>
    <dbReference type="NCBI Taxonomy" id="430066"/>
    <lineage>
        <taxon>Bacteria</taxon>
        <taxon>Pseudomonadati</taxon>
        <taxon>Pseudomonadota</taxon>
        <taxon>Alphaproteobacteria</taxon>
        <taxon>Hyphomicrobiales</taxon>
        <taxon>Brucellaceae</taxon>
        <taxon>Brucella/Ochrobactrum group</taxon>
        <taxon>Brucella</taxon>
    </lineage>
</organism>
<accession>B2S7K3</accession>
<sequence>MAVPKRKTSPSRRGMRRSADALKAPTYVEDKNSGELRRPHHIDLKSGMYRGRQVLEPKE</sequence>
<proteinExistence type="inferred from homology"/>